<keyword id="KW-0963">Cytoplasm</keyword>
<keyword id="KW-0227">DNA damage</keyword>
<keyword id="KW-0228">DNA excision</keyword>
<keyword id="KW-0234">DNA repair</keyword>
<keyword id="KW-0267">Excision nuclease</keyword>
<keyword id="KW-0742">SOS response</keyword>
<name>UVRC_BURP1</name>
<proteinExistence type="inferred from homology"/>
<evidence type="ECO:0000255" key="1">
    <source>
        <dbReference type="HAMAP-Rule" id="MF_00203"/>
    </source>
</evidence>
<evidence type="ECO:0000256" key="2">
    <source>
        <dbReference type="SAM" id="MobiDB-lite"/>
    </source>
</evidence>
<evidence type="ECO:0000305" key="3"/>
<dbReference type="EMBL" id="CP000124">
    <property type="protein sequence ID" value="ABA50178.1"/>
    <property type="status" value="ALT_INIT"/>
    <property type="molecule type" value="Genomic_DNA"/>
</dbReference>
<dbReference type="RefSeq" id="WP_004527460.1">
    <property type="nucleotide sequence ID" value="NC_007434.1"/>
</dbReference>
<dbReference type="SMR" id="Q3JQ88"/>
<dbReference type="EnsemblBacteria" id="ABA50178">
    <property type="protein sequence ID" value="ABA50178"/>
    <property type="gene ID" value="BURPS1710b_2884"/>
</dbReference>
<dbReference type="GeneID" id="93061000"/>
<dbReference type="KEGG" id="bpm:BURPS1710b_2884"/>
<dbReference type="HOGENOM" id="CLU_014841_3_2_4"/>
<dbReference type="Proteomes" id="UP000002700">
    <property type="component" value="Chromosome I"/>
</dbReference>
<dbReference type="GO" id="GO:0005737">
    <property type="term" value="C:cytoplasm"/>
    <property type="evidence" value="ECO:0007669"/>
    <property type="project" value="UniProtKB-SubCell"/>
</dbReference>
<dbReference type="GO" id="GO:0009380">
    <property type="term" value="C:excinuclease repair complex"/>
    <property type="evidence" value="ECO:0007669"/>
    <property type="project" value="InterPro"/>
</dbReference>
<dbReference type="GO" id="GO:0003677">
    <property type="term" value="F:DNA binding"/>
    <property type="evidence" value="ECO:0007669"/>
    <property type="project" value="UniProtKB-UniRule"/>
</dbReference>
<dbReference type="GO" id="GO:0009381">
    <property type="term" value="F:excinuclease ABC activity"/>
    <property type="evidence" value="ECO:0007669"/>
    <property type="project" value="UniProtKB-UniRule"/>
</dbReference>
<dbReference type="GO" id="GO:0006289">
    <property type="term" value="P:nucleotide-excision repair"/>
    <property type="evidence" value="ECO:0007669"/>
    <property type="project" value="UniProtKB-UniRule"/>
</dbReference>
<dbReference type="GO" id="GO:0009432">
    <property type="term" value="P:SOS response"/>
    <property type="evidence" value="ECO:0007669"/>
    <property type="project" value="UniProtKB-UniRule"/>
</dbReference>
<dbReference type="CDD" id="cd10434">
    <property type="entry name" value="GIY-YIG_UvrC_Cho"/>
    <property type="match status" value="1"/>
</dbReference>
<dbReference type="FunFam" id="3.30.420.340:FF:000001">
    <property type="entry name" value="UvrABC system protein C"/>
    <property type="match status" value="1"/>
</dbReference>
<dbReference type="FunFam" id="3.40.1440.10:FF:000001">
    <property type="entry name" value="UvrABC system protein C"/>
    <property type="match status" value="1"/>
</dbReference>
<dbReference type="Gene3D" id="1.10.150.20">
    <property type="entry name" value="5' to 3' exonuclease, C-terminal subdomain"/>
    <property type="match status" value="1"/>
</dbReference>
<dbReference type="Gene3D" id="3.40.1440.10">
    <property type="entry name" value="GIY-YIG endonuclease"/>
    <property type="match status" value="1"/>
</dbReference>
<dbReference type="Gene3D" id="4.10.860.10">
    <property type="entry name" value="UVR domain"/>
    <property type="match status" value="1"/>
</dbReference>
<dbReference type="Gene3D" id="3.30.420.340">
    <property type="entry name" value="UvrC, RNAse H endonuclease domain"/>
    <property type="match status" value="1"/>
</dbReference>
<dbReference type="HAMAP" id="MF_00203">
    <property type="entry name" value="UvrC"/>
    <property type="match status" value="1"/>
</dbReference>
<dbReference type="InterPro" id="IPR000305">
    <property type="entry name" value="GIY-YIG_endonuc"/>
</dbReference>
<dbReference type="InterPro" id="IPR035901">
    <property type="entry name" value="GIY-YIG_endonuc_sf"/>
</dbReference>
<dbReference type="InterPro" id="IPR047296">
    <property type="entry name" value="GIY-YIG_UvrC_Cho"/>
</dbReference>
<dbReference type="InterPro" id="IPR003583">
    <property type="entry name" value="Hlx-hairpin-Hlx_DNA-bd_motif"/>
</dbReference>
<dbReference type="InterPro" id="IPR010994">
    <property type="entry name" value="RuvA_2-like"/>
</dbReference>
<dbReference type="InterPro" id="IPR001943">
    <property type="entry name" value="UVR_dom"/>
</dbReference>
<dbReference type="InterPro" id="IPR036876">
    <property type="entry name" value="UVR_dom_sf"/>
</dbReference>
<dbReference type="InterPro" id="IPR050066">
    <property type="entry name" value="UvrABC_protein_C"/>
</dbReference>
<dbReference type="InterPro" id="IPR004791">
    <property type="entry name" value="UvrC"/>
</dbReference>
<dbReference type="InterPro" id="IPR001162">
    <property type="entry name" value="UvrC_RNase_H_dom"/>
</dbReference>
<dbReference type="InterPro" id="IPR038476">
    <property type="entry name" value="UvrC_RNase_H_dom_sf"/>
</dbReference>
<dbReference type="NCBIfam" id="NF001824">
    <property type="entry name" value="PRK00558.1-5"/>
    <property type="match status" value="1"/>
</dbReference>
<dbReference type="NCBIfam" id="TIGR00194">
    <property type="entry name" value="uvrC"/>
    <property type="match status" value="1"/>
</dbReference>
<dbReference type="PANTHER" id="PTHR30562:SF1">
    <property type="entry name" value="UVRABC SYSTEM PROTEIN C"/>
    <property type="match status" value="1"/>
</dbReference>
<dbReference type="PANTHER" id="PTHR30562">
    <property type="entry name" value="UVRC/OXIDOREDUCTASE"/>
    <property type="match status" value="1"/>
</dbReference>
<dbReference type="Pfam" id="PF01541">
    <property type="entry name" value="GIY-YIG"/>
    <property type="match status" value="1"/>
</dbReference>
<dbReference type="Pfam" id="PF14520">
    <property type="entry name" value="HHH_5"/>
    <property type="match status" value="1"/>
</dbReference>
<dbReference type="Pfam" id="PF02151">
    <property type="entry name" value="UVR"/>
    <property type="match status" value="1"/>
</dbReference>
<dbReference type="Pfam" id="PF22920">
    <property type="entry name" value="UvrC_RNaseH"/>
    <property type="match status" value="2"/>
</dbReference>
<dbReference type="Pfam" id="PF08459">
    <property type="entry name" value="UvrC_RNaseH_dom"/>
    <property type="match status" value="1"/>
</dbReference>
<dbReference type="SMART" id="SM00465">
    <property type="entry name" value="GIYc"/>
    <property type="match status" value="1"/>
</dbReference>
<dbReference type="SMART" id="SM00278">
    <property type="entry name" value="HhH1"/>
    <property type="match status" value="2"/>
</dbReference>
<dbReference type="SUPFAM" id="SSF46600">
    <property type="entry name" value="C-terminal UvrC-binding domain of UvrB"/>
    <property type="match status" value="1"/>
</dbReference>
<dbReference type="SUPFAM" id="SSF82771">
    <property type="entry name" value="GIY-YIG endonuclease"/>
    <property type="match status" value="1"/>
</dbReference>
<dbReference type="SUPFAM" id="SSF47781">
    <property type="entry name" value="RuvA domain 2-like"/>
    <property type="match status" value="1"/>
</dbReference>
<dbReference type="PROSITE" id="PS50164">
    <property type="entry name" value="GIY_YIG"/>
    <property type="match status" value="1"/>
</dbReference>
<dbReference type="PROSITE" id="PS50151">
    <property type="entry name" value="UVR"/>
    <property type="match status" value="1"/>
</dbReference>
<dbReference type="PROSITE" id="PS50165">
    <property type="entry name" value="UVRC"/>
    <property type="match status" value="1"/>
</dbReference>
<feature type="chain" id="PRO_0000264879" description="UvrABC system protein C">
    <location>
        <begin position="1"/>
        <end position="747"/>
    </location>
</feature>
<feature type="domain" description="GIY-YIG" evidence="1">
    <location>
        <begin position="22"/>
        <end position="100"/>
    </location>
</feature>
<feature type="domain" description="UVR" evidence="1">
    <location>
        <begin position="209"/>
        <end position="244"/>
    </location>
</feature>
<feature type="region of interest" description="Disordered" evidence="2">
    <location>
        <begin position="363"/>
        <end position="400"/>
    </location>
</feature>
<feature type="compositionally biased region" description="Basic and acidic residues" evidence="2">
    <location>
        <begin position="370"/>
        <end position="387"/>
    </location>
</feature>
<feature type="compositionally biased region" description="Low complexity" evidence="2">
    <location>
        <begin position="388"/>
        <end position="400"/>
    </location>
</feature>
<comment type="function">
    <text evidence="1">The UvrABC repair system catalyzes the recognition and processing of DNA lesions. UvrC both incises the 5' and 3' sides of the lesion. The N-terminal half is responsible for the 3' incision and the C-terminal half is responsible for the 5' incision.</text>
</comment>
<comment type="subunit">
    <text evidence="1">Interacts with UvrB in an incision complex.</text>
</comment>
<comment type="subcellular location">
    <subcellularLocation>
        <location evidence="1">Cytoplasm</location>
    </subcellularLocation>
</comment>
<comment type="similarity">
    <text evidence="1">Belongs to the UvrC family.</text>
</comment>
<comment type="sequence caution" evidence="3">
    <conflict type="erroneous initiation">
        <sequence resource="EMBL-CDS" id="ABA50178"/>
    </conflict>
</comment>
<gene>
    <name evidence="1" type="primary">uvrC</name>
    <name type="ordered locus">BURPS1710b_2884</name>
</gene>
<sequence length="747" mass="80808">MTSPDAPESRFEPKPILAQLPHLPGVYRYYDAQDAVLYVGKARDLKKRVSSYFTKTQLSPRIAMMITRIARIETTVTRSEAEALLLENNLIKALAPRYNILFRDDKSYPYLKLTGHRFPRMAYYRGAVDKKNQYFGPFPSAWAVRESIQILQRVFQLRTCEDSVFNNRTRPCLLHQIGRCSAPCVGAIGEEDYARDVDNASRFLLGRQGEVMGELERKMHAFAAELKFEQAAAVRNQMSSLAKVLHQQAIDVGGDSDVDILAVVAQGGRVCVNLAMVRGGRHLGDKAYFPAHVETALALAGDIEALAGEGAGDGVQAAAQPAQAPLATDADATDAAATEAKTVTAAAAARAGARTAQAAGARAAASAEGDVERRAEGETHARADAREAAALPDGAAAAQEADADVDAAPLETEVLEAFIAQHYLGNRVPPVLVVSHAPANRELIDLLVEQAGHKVAVVRQPQGQKRAWLTMAEQNARLALARLLSEQGSQQARTRSLADVLGYESDDLAQLRIECFDISHTMGEATQASCVVYHHHRMQSSEYRRYNIAGITPGDDYAAMRQVLTRRYEKMVEEAAAEASADEAAGIDGNAVHAAASAGRLPNVVLIDGGRGQVEIARQVFSELGLDISMLVGVAKGEGRKVGLETLIFADGRAPLELGKESAALMLVAQIRDEAHRFAITGMRAKRAKTRQTSRLEELEGVGAKRRQRLLARFGGLRGVVAASVDELASVEGISRALAEQIYRQLH</sequence>
<organism>
    <name type="scientific">Burkholderia pseudomallei (strain 1710b)</name>
    <dbReference type="NCBI Taxonomy" id="320372"/>
    <lineage>
        <taxon>Bacteria</taxon>
        <taxon>Pseudomonadati</taxon>
        <taxon>Pseudomonadota</taxon>
        <taxon>Betaproteobacteria</taxon>
        <taxon>Burkholderiales</taxon>
        <taxon>Burkholderiaceae</taxon>
        <taxon>Burkholderia</taxon>
        <taxon>pseudomallei group</taxon>
    </lineage>
</organism>
<protein>
    <recommendedName>
        <fullName evidence="1">UvrABC system protein C</fullName>
        <shortName evidence="1">Protein UvrC</shortName>
    </recommendedName>
    <alternativeName>
        <fullName evidence="1">Excinuclease ABC subunit C</fullName>
    </alternativeName>
</protein>
<reference key="1">
    <citation type="journal article" date="2010" name="Genome Biol. Evol.">
        <title>Continuing evolution of Burkholderia mallei through genome reduction and large-scale rearrangements.</title>
        <authorList>
            <person name="Losada L."/>
            <person name="Ronning C.M."/>
            <person name="DeShazer D."/>
            <person name="Woods D."/>
            <person name="Fedorova N."/>
            <person name="Kim H.S."/>
            <person name="Shabalina S.A."/>
            <person name="Pearson T.R."/>
            <person name="Brinkac L."/>
            <person name="Tan P."/>
            <person name="Nandi T."/>
            <person name="Crabtree J."/>
            <person name="Badger J."/>
            <person name="Beckstrom-Sternberg S."/>
            <person name="Saqib M."/>
            <person name="Schutzer S.E."/>
            <person name="Keim P."/>
            <person name="Nierman W.C."/>
        </authorList>
    </citation>
    <scope>NUCLEOTIDE SEQUENCE [LARGE SCALE GENOMIC DNA]</scope>
    <source>
        <strain>1710b</strain>
    </source>
</reference>
<accession>Q3JQ88</accession>